<keyword id="KW-0025">Alternative splicing</keyword>
<keyword id="KW-0238">DNA-binding</keyword>
<keyword id="KW-0479">Metal-binding</keyword>
<keyword id="KW-0539">Nucleus</keyword>
<keyword id="KW-0597">Phosphoprotein</keyword>
<keyword id="KW-1185">Reference proteome</keyword>
<keyword id="KW-0677">Repeat</keyword>
<keyword id="KW-0678">Repressor</keyword>
<keyword id="KW-0804">Transcription</keyword>
<keyword id="KW-0805">Transcription regulation</keyword>
<keyword id="KW-0862">Zinc</keyword>
<keyword id="KW-0863">Zinc-finger</keyword>
<dbReference type="EMBL" id="AJ868292">
    <property type="protein sequence ID" value="CAI30631.1"/>
    <property type="status" value="ALT_SEQ"/>
    <property type="molecule type" value="mRNA"/>
</dbReference>
<dbReference type="EMBL" id="AK084975">
    <property type="protein sequence ID" value="BAC39326.1"/>
    <property type="molecule type" value="mRNA"/>
</dbReference>
<dbReference type="EMBL" id="AK145386">
    <property type="protein sequence ID" value="BAE26404.1"/>
    <property type="molecule type" value="mRNA"/>
</dbReference>
<dbReference type="EMBL" id="AK156332">
    <property type="protein sequence ID" value="BAE33679.1"/>
    <property type="molecule type" value="mRNA"/>
</dbReference>
<dbReference type="EMBL" id="AK157276">
    <property type="protein sequence ID" value="BAE34025.1"/>
    <property type="molecule type" value="mRNA"/>
</dbReference>
<dbReference type="EMBL" id="AK129266">
    <property type="protein sequence ID" value="BAC98076.1"/>
    <property type="status" value="ALT_INIT"/>
    <property type="molecule type" value="mRNA"/>
</dbReference>
<dbReference type="EMBL" id="BC065124">
    <property type="protein sequence ID" value="AAH65124.1"/>
    <property type="molecule type" value="mRNA"/>
</dbReference>
<dbReference type="EMBL" id="AF117382">
    <property type="protein sequence ID" value="AAF28801.1"/>
    <property type="molecule type" value="mRNA"/>
</dbReference>
<dbReference type="CCDS" id="CCDS27999.1">
    <molecule id="Q9JLZ6-1"/>
</dbReference>
<dbReference type="RefSeq" id="NP_849253.2">
    <molecule id="Q9JLZ6-1"/>
    <property type="nucleotide sequence ID" value="NM_178922.3"/>
</dbReference>
<dbReference type="SMR" id="Q9JLZ6"/>
<dbReference type="BioGRID" id="208374">
    <property type="interactions" value="2"/>
</dbReference>
<dbReference type="FunCoup" id="Q9JLZ6">
    <property type="interactions" value="1222"/>
</dbReference>
<dbReference type="STRING" id="10090.ENSMUSP00000087656"/>
<dbReference type="iPTMnet" id="Q9JLZ6"/>
<dbReference type="PhosphoSitePlus" id="Q9JLZ6"/>
<dbReference type="SwissPalm" id="Q9JLZ6"/>
<dbReference type="PaxDb" id="10090-ENSMUSP00000087656"/>
<dbReference type="PeptideAtlas" id="Q9JLZ6"/>
<dbReference type="ProteomicsDB" id="269745">
    <molecule id="Q9JLZ6-1"/>
</dbReference>
<dbReference type="ProteomicsDB" id="269746">
    <molecule id="Q9JLZ6-2"/>
</dbReference>
<dbReference type="Pumba" id="Q9JLZ6"/>
<dbReference type="Antibodypedia" id="8461">
    <property type="antibodies" value="252 antibodies from 30 providers"/>
</dbReference>
<dbReference type="DNASU" id="58180"/>
<dbReference type="Ensembl" id="ENSMUST00000090190.14">
    <molecule id="Q9JLZ6-1"/>
    <property type="protein sequence ID" value="ENSMUSP00000087656.6"/>
    <property type="gene ID" value="ENSMUSG00000050240.17"/>
</dbReference>
<dbReference type="Ensembl" id="ENSMUST00000232082.2">
    <molecule id="Q9JLZ6-2"/>
    <property type="protein sequence ID" value="ENSMUSP00000156293.2"/>
    <property type="gene ID" value="ENSMUSG00000050240.17"/>
</dbReference>
<dbReference type="GeneID" id="58180"/>
<dbReference type="KEGG" id="mmu:58180"/>
<dbReference type="UCSC" id="uc007yko.1">
    <molecule id="Q9JLZ6-1"/>
    <property type="organism name" value="mouse"/>
</dbReference>
<dbReference type="AGR" id="MGI:1929869"/>
<dbReference type="CTD" id="23119"/>
<dbReference type="MGI" id="MGI:1929869">
    <property type="gene designation" value="Hic2"/>
</dbReference>
<dbReference type="VEuPathDB" id="HostDB:ENSMUSG00000050240"/>
<dbReference type="eggNOG" id="KOG1721">
    <property type="taxonomic scope" value="Eukaryota"/>
</dbReference>
<dbReference type="GeneTree" id="ENSGT00940000159978"/>
<dbReference type="HOGENOM" id="CLU_015352_1_0_1"/>
<dbReference type="InParanoid" id="Q9JLZ6"/>
<dbReference type="OMA" id="TGHNNHY"/>
<dbReference type="OrthoDB" id="8922241at2759"/>
<dbReference type="PhylomeDB" id="Q9JLZ6"/>
<dbReference type="TreeFam" id="TF333488"/>
<dbReference type="BioGRID-ORCS" id="58180">
    <property type="hits" value="2 hits in 76 CRISPR screens"/>
</dbReference>
<dbReference type="ChiTaRS" id="Hic2">
    <property type="organism name" value="mouse"/>
</dbReference>
<dbReference type="PRO" id="PR:Q9JLZ6"/>
<dbReference type="Proteomes" id="UP000000589">
    <property type="component" value="Chromosome 16"/>
</dbReference>
<dbReference type="RNAct" id="Q9JLZ6">
    <property type="molecule type" value="protein"/>
</dbReference>
<dbReference type="Bgee" id="ENSMUSG00000050240">
    <property type="expression patterns" value="Expressed in placenta labyrinth and 180 other cell types or tissues"/>
</dbReference>
<dbReference type="GO" id="GO:0005654">
    <property type="term" value="C:nucleoplasm"/>
    <property type="evidence" value="ECO:0007669"/>
    <property type="project" value="Ensembl"/>
</dbReference>
<dbReference type="GO" id="GO:0005634">
    <property type="term" value="C:nucleus"/>
    <property type="evidence" value="ECO:0000250"/>
    <property type="project" value="UniProtKB"/>
</dbReference>
<dbReference type="GO" id="GO:0005886">
    <property type="term" value="C:plasma membrane"/>
    <property type="evidence" value="ECO:0007669"/>
    <property type="project" value="Ensembl"/>
</dbReference>
<dbReference type="GO" id="GO:0003677">
    <property type="term" value="F:DNA binding"/>
    <property type="evidence" value="ECO:0007669"/>
    <property type="project" value="UniProtKB-KW"/>
</dbReference>
<dbReference type="GO" id="GO:0008270">
    <property type="term" value="F:zinc ion binding"/>
    <property type="evidence" value="ECO:0007669"/>
    <property type="project" value="UniProtKB-KW"/>
</dbReference>
<dbReference type="CDD" id="cd18334">
    <property type="entry name" value="BTB_POZ_ZBTB30_HIC2"/>
    <property type="match status" value="1"/>
</dbReference>
<dbReference type="FunFam" id="3.30.160.60:FF:000195">
    <property type="entry name" value="Hypermethylated in cancer 1 protein-like"/>
    <property type="match status" value="1"/>
</dbReference>
<dbReference type="FunFam" id="3.30.160.60:FF:000536">
    <property type="entry name" value="hypermethylated in cancer 2 protein-like"/>
    <property type="match status" value="1"/>
</dbReference>
<dbReference type="FunFam" id="3.30.160.60:FF:000746">
    <property type="entry name" value="hypermethylated in cancer 2 protein-like"/>
    <property type="match status" value="1"/>
</dbReference>
<dbReference type="FunFam" id="3.30.710.10:FF:000032">
    <property type="entry name" value="hypermethylated in cancer 2 protein-like"/>
    <property type="match status" value="1"/>
</dbReference>
<dbReference type="FunFam" id="3.30.160.60:FF:000145">
    <property type="entry name" value="Zinc finger protein 574"/>
    <property type="match status" value="1"/>
</dbReference>
<dbReference type="Gene3D" id="3.30.160.60">
    <property type="entry name" value="Classic Zinc Finger"/>
    <property type="match status" value="4"/>
</dbReference>
<dbReference type="Gene3D" id="3.30.710.10">
    <property type="entry name" value="Potassium Channel Kv1.1, Chain A"/>
    <property type="match status" value="1"/>
</dbReference>
<dbReference type="InterPro" id="IPR000210">
    <property type="entry name" value="BTB/POZ_dom"/>
</dbReference>
<dbReference type="InterPro" id="IPR011333">
    <property type="entry name" value="SKP1/BTB/POZ_sf"/>
</dbReference>
<dbReference type="InterPro" id="IPR036236">
    <property type="entry name" value="Znf_C2H2_sf"/>
</dbReference>
<dbReference type="InterPro" id="IPR013087">
    <property type="entry name" value="Znf_C2H2_type"/>
</dbReference>
<dbReference type="PANTHER" id="PTHR24394:SF22">
    <property type="entry name" value="HYPERMETHYLATED IN CANCER 2 PROTEIN"/>
    <property type="match status" value="1"/>
</dbReference>
<dbReference type="PANTHER" id="PTHR24394">
    <property type="entry name" value="ZINC FINGER PROTEIN"/>
    <property type="match status" value="1"/>
</dbReference>
<dbReference type="Pfam" id="PF00651">
    <property type="entry name" value="BTB"/>
    <property type="match status" value="1"/>
</dbReference>
<dbReference type="Pfam" id="PF00096">
    <property type="entry name" value="zf-C2H2"/>
    <property type="match status" value="4"/>
</dbReference>
<dbReference type="SMART" id="SM00225">
    <property type="entry name" value="BTB"/>
    <property type="match status" value="1"/>
</dbReference>
<dbReference type="SMART" id="SM00355">
    <property type="entry name" value="ZnF_C2H2"/>
    <property type="match status" value="5"/>
</dbReference>
<dbReference type="SUPFAM" id="SSF57667">
    <property type="entry name" value="beta-beta-alpha zinc fingers"/>
    <property type="match status" value="3"/>
</dbReference>
<dbReference type="SUPFAM" id="SSF54695">
    <property type="entry name" value="POZ domain"/>
    <property type="match status" value="1"/>
</dbReference>
<dbReference type="PROSITE" id="PS50097">
    <property type="entry name" value="BTB"/>
    <property type="match status" value="1"/>
</dbReference>
<dbReference type="PROSITE" id="PS00028">
    <property type="entry name" value="ZINC_FINGER_C2H2_1"/>
    <property type="match status" value="5"/>
</dbReference>
<dbReference type="PROSITE" id="PS50157">
    <property type="entry name" value="ZINC_FINGER_C2H2_2"/>
    <property type="match status" value="5"/>
</dbReference>
<protein>
    <recommendedName>
        <fullName>Hypermethylated in cancer 2 protein</fullName>
        <shortName>Hic-2</shortName>
    </recommendedName>
</protein>
<feature type="chain" id="PRO_0000046946" description="Hypermethylated in cancer 2 protein">
    <location>
        <begin position="1"/>
        <end position="619"/>
    </location>
</feature>
<feature type="domain" description="BTB" evidence="3">
    <location>
        <begin position="46"/>
        <end position="109"/>
    </location>
</feature>
<feature type="zinc finger region" description="C2H2-type 1" evidence="4">
    <location>
        <begin position="446"/>
        <end position="468"/>
    </location>
</feature>
<feature type="zinc finger region" description="C2H2-type 2" evidence="4">
    <location>
        <begin position="509"/>
        <end position="531"/>
    </location>
</feature>
<feature type="zinc finger region" description="C2H2-type 3" evidence="4">
    <location>
        <begin position="537"/>
        <end position="559"/>
    </location>
</feature>
<feature type="zinc finger region" description="C2H2-type 4" evidence="4">
    <location>
        <begin position="565"/>
        <end position="587"/>
    </location>
</feature>
<feature type="zinc finger region" description="C2H2-type 5" evidence="4">
    <location>
        <begin position="593"/>
        <end position="615"/>
    </location>
</feature>
<feature type="region of interest" description="Disordered" evidence="5">
    <location>
        <begin position="180"/>
        <end position="293"/>
    </location>
</feature>
<feature type="region of interest" description="Binding to CtBP" evidence="1">
    <location>
        <begin position="247"/>
        <end position="249"/>
    </location>
</feature>
<feature type="region of interest" description="Disordered" evidence="5">
    <location>
        <begin position="307"/>
        <end position="426"/>
    </location>
</feature>
<feature type="compositionally biased region" description="Gly residues" evidence="5">
    <location>
        <begin position="214"/>
        <end position="228"/>
    </location>
</feature>
<feature type="compositionally biased region" description="Polar residues" evidence="5">
    <location>
        <begin position="281"/>
        <end position="293"/>
    </location>
</feature>
<feature type="compositionally biased region" description="Basic and acidic residues" evidence="5">
    <location>
        <begin position="337"/>
        <end position="357"/>
    </location>
</feature>
<feature type="modified residue" description="Phosphoserine" evidence="2">
    <location>
        <position position="166"/>
    </location>
</feature>
<feature type="modified residue" description="Phosphoserine" evidence="2">
    <location>
        <position position="169"/>
    </location>
</feature>
<feature type="modified residue" description="Phosphoserine" evidence="2">
    <location>
        <position position="197"/>
    </location>
</feature>
<feature type="modified residue" description="Phosphoserine" evidence="2">
    <location>
        <position position="349"/>
    </location>
</feature>
<feature type="modified residue" description="Phosphoserine" evidence="2">
    <location>
        <position position="416"/>
    </location>
</feature>
<feature type="splice variant" id="VSP_010499" description="In isoform 2." evidence="6">
    <original>KMFTQRGTMTRHMRSHLGLKPFACDECGMRFTRQYRLTEHMRVHSGEKPYECQLCGGKFTQQRNLISHLRMHTSPS</original>
    <variation>SEPTPSCPLQSSGMSGNLQQSQR</variation>
    <location>
        <begin position="544"/>
        <end position="619"/>
    </location>
</feature>
<feature type="sequence conflict" description="In Ref. 5; AAF28801." evidence="7" ref="5">
    <original>RE</original>
    <variation>AA</variation>
    <location>
        <begin position="354"/>
        <end position="355"/>
    </location>
</feature>
<comment type="function">
    <text evidence="1">Transcriptional repressor.</text>
</comment>
<comment type="subunit">
    <text evidence="1">Self-associates. Interacts with HIC1 (By similarity).</text>
</comment>
<comment type="subcellular location">
    <subcellularLocation>
        <location evidence="7">Nucleus</location>
    </subcellularLocation>
</comment>
<comment type="alternative products">
    <event type="alternative splicing"/>
    <isoform>
        <id>Q9JLZ6-1</id>
        <name>1</name>
        <sequence type="displayed"/>
    </isoform>
    <isoform>
        <id>Q9JLZ6-2</id>
        <name>2</name>
        <sequence type="described" ref="VSP_010499"/>
    </isoform>
</comment>
<comment type="similarity">
    <text evidence="7">Belongs to the krueppel C2H2-type zinc-finger protein family. Hic subfamily.</text>
</comment>
<comment type="sequence caution" evidence="7">
    <conflict type="erroneous initiation">
        <sequence resource="EMBL-CDS" id="BAC98076"/>
    </conflict>
    <text>Extended N-terminus.</text>
</comment>
<comment type="sequence caution" evidence="7">
    <conflict type="miscellaneous discrepancy">
        <sequence resource="EMBL-CDS" id="CAI30631"/>
    </conflict>
    <text>Probable cloning artifact.</text>
</comment>
<evidence type="ECO:0000250" key="1"/>
<evidence type="ECO:0000250" key="2">
    <source>
        <dbReference type="UniProtKB" id="Q96JB3"/>
    </source>
</evidence>
<evidence type="ECO:0000255" key="3">
    <source>
        <dbReference type="PROSITE-ProRule" id="PRU00037"/>
    </source>
</evidence>
<evidence type="ECO:0000255" key="4">
    <source>
        <dbReference type="PROSITE-ProRule" id="PRU00042"/>
    </source>
</evidence>
<evidence type="ECO:0000256" key="5">
    <source>
        <dbReference type="SAM" id="MobiDB-lite"/>
    </source>
</evidence>
<evidence type="ECO:0000303" key="6">
    <source>
    </source>
</evidence>
<evidence type="ECO:0000305" key="7"/>
<reference key="1">
    <citation type="submission" date="2004-12" db="EMBL/GenBank/DDBJ databases">
        <title>Characterization and expression analysis of the murine Hic2 gene.</title>
        <authorList>
            <person name="Terzic A."/>
            <person name="Graw J."/>
        </authorList>
    </citation>
    <scope>NUCLEOTIDE SEQUENCE [MRNA] (ISOFORM 1)</scope>
    <source>
        <strain>C3H/HeJ</strain>
    </source>
</reference>
<reference key="2">
    <citation type="journal article" date="2005" name="Science">
        <title>The transcriptional landscape of the mammalian genome.</title>
        <authorList>
            <person name="Carninci P."/>
            <person name="Kasukawa T."/>
            <person name="Katayama S."/>
            <person name="Gough J."/>
            <person name="Frith M.C."/>
            <person name="Maeda N."/>
            <person name="Oyama R."/>
            <person name="Ravasi T."/>
            <person name="Lenhard B."/>
            <person name="Wells C."/>
            <person name="Kodzius R."/>
            <person name="Shimokawa K."/>
            <person name="Bajic V.B."/>
            <person name="Brenner S.E."/>
            <person name="Batalov S."/>
            <person name="Forrest A.R."/>
            <person name="Zavolan M."/>
            <person name="Davis M.J."/>
            <person name="Wilming L.G."/>
            <person name="Aidinis V."/>
            <person name="Allen J.E."/>
            <person name="Ambesi-Impiombato A."/>
            <person name="Apweiler R."/>
            <person name="Aturaliya R.N."/>
            <person name="Bailey T.L."/>
            <person name="Bansal M."/>
            <person name="Baxter L."/>
            <person name="Beisel K.W."/>
            <person name="Bersano T."/>
            <person name="Bono H."/>
            <person name="Chalk A.M."/>
            <person name="Chiu K.P."/>
            <person name="Choudhary V."/>
            <person name="Christoffels A."/>
            <person name="Clutterbuck D.R."/>
            <person name="Crowe M.L."/>
            <person name="Dalla E."/>
            <person name="Dalrymple B.P."/>
            <person name="de Bono B."/>
            <person name="Della Gatta G."/>
            <person name="di Bernardo D."/>
            <person name="Down T."/>
            <person name="Engstrom P."/>
            <person name="Fagiolini M."/>
            <person name="Faulkner G."/>
            <person name="Fletcher C.F."/>
            <person name="Fukushima T."/>
            <person name="Furuno M."/>
            <person name="Futaki S."/>
            <person name="Gariboldi M."/>
            <person name="Georgii-Hemming P."/>
            <person name="Gingeras T.R."/>
            <person name="Gojobori T."/>
            <person name="Green R.E."/>
            <person name="Gustincich S."/>
            <person name="Harbers M."/>
            <person name="Hayashi Y."/>
            <person name="Hensch T.K."/>
            <person name="Hirokawa N."/>
            <person name="Hill D."/>
            <person name="Huminiecki L."/>
            <person name="Iacono M."/>
            <person name="Ikeo K."/>
            <person name="Iwama A."/>
            <person name="Ishikawa T."/>
            <person name="Jakt M."/>
            <person name="Kanapin A."/>
            <person name="Katoh M."/>
            <person name="Kawasawa Y."/>
            <person name="Kelso J."/>
            <person name="Kitamura H."/>
            <person name="Kitano H."/>
            <person name="Kollias G."/>
            <person name="Krishnan S.P."/>
            <person name="Kruger A."/>
            <person name="Kummerfeld S.K."/>
            <person name="Kurochkin I.V."/>
            <person name="Lareau L.F."/>
            <person name="Lazarevic D."/>
            <person name="Lipovich L."/>
            <person name="Liu J."/>
            <person name="Liuni S."/>
            <person name="McWilliam S."/>
            <person name="Madan Babu M."/>
            <person name="Madera M."/>
            <person name="Marchionni L."/>
            <person name="Matsuda H."/>
            <person name="Matsuzawa S."/>
            <person name="Miki H."/>
            <person name="Mignone F."/>
            <person name="Miyake S."/>
            <person name="Morris K."/>
            <person name="Mottagui-Tabar S."/>
            <person name="Mulder N."/>
            <person name="Nakano N."/>
            <person name="Nakauchi H."/>
            <person name="Ng P."/>
            <person name="Nilsson R."/>
            <person name="Nishiguchi S."/>
            <person name="Nishikawa S."/>
            <person name="Nori F."/>
            <person name="Ohara O."/>
            <person name="Okazaki Y."/>
            <person name="Orlando V."/>
            <person name="Pang K.C."/>
            <person name="Pavan W.J."/>
            <person name="Pavesi G."/>
            <person name="Pesole G."/>
            <person name="Petrovsky N."/>
            <person name="Piazza S."/>
            <person name="Reed J."/>
            <person name="Reid J.F."/>
            <person name="Ring B.Z."/>
            <person name="Ringwald M."/>
            <person name="Rost B."/>
            <person name="Ruan Y."/>
            <person name="Salzberg S.L."/>
            <person name="Sandelin A."/>
            <person name="Schneider C."/>
            <person name="Schoenbach C."/>
            <person name="Sekiguchi K."/>
            <person name="Semple C.A."/>
            <person name="Seno S."/>
            <person name="Sessa L."/>
            <person name="Sheng Y."/>
            <person name="Shibata Y."/>
            <person name="Shimada H."/>
            <person name="Shimada K."/>
            <person name="Silva D."/>
            <person name="Sinclair B."/>
            <person name="Sperling S."/>
            <person name="Stupka E."/>
            <person name="Sugiura K."/>
            <person name="Sultana R."/>
            <person name="Takenaka Y."/>
            <person name="Taki K."/>
            <person name="Tammoja K."/>
            <person name="Tan S.L."/>
            <person name="Tang S."/>
            <person name="Taylor M.S."/>
            <person name="Tegner J."/>
            <person name="Teichmann S.A."/>
            <person name="Ueda H.R."/>
            <person name="van Nimwegen E."/>
            <person name="Verardo R."/>
            <person name="Wei C.L."/>
            <person name="Yagi K."/>
            <person name="Yamanishi H."/>
            <person name="Zabarovsky E."/>
            <person name="Zhu S."/>
            <person name="Zimmer A."/>
            <person name="Hide W."/>
            <person name="Bult C."/>
            <person name="Grimmond S.M."/>
            <person name="Teasdale R.D."/>
            <person name="Liu E.T."/>
            <person name="Brusic V."/>
            <person name="Quackenbush J."/>
            <person name="Wahlestedt C."/>
            <person name="Mattick J.S."/>
            <person name="Hume D.A."/>
            <person name="Kai C."/>
            <person name="Sasaki D."/>
            <person name="Tomaru Y."/>
            <person name="Fukuda S."/>
            <person name="Kanamori-Katayama M."/>
            <person name="Suzuki M."/>
            <person name="Aoki J."/>
            <person name="Arakawa T."/>
            <person name="Iida J."/>
            <person name="Imamura K."/>
            <person name="Itoh M."/>
            <person name="Kato T."/>
            <person name="Kawaji H."/>
            <person name="Kawagashira N."/>
            <person name="Kawashima T."/>
            <person name="Kojima M."/>
            <person name="Kondo S."/>
            <person name="Konno H."/>
            <person name="Nakano K."/>
            <person name="Ninomiya N."/>
            <person name="Nishio T."/>
            <person name="Okada M."/>
            <person name="Plessy C."/>
            <person name="Shibata K."/>
            <person name="Shiraki T."/>
            <person name="Suzuki S."/>
            <person name="Tagami M."/>
            <person name="Waki K."/>
            <person name="Watahiki A."/>
            <person name="Okamura-Oho Y."/>
            <person name="Suzuki H."/>
            <person name="Kawai J."/>
            <person name="Hayashizaki Y."/>
        </authorList>
    </citation>
    <scope>NUCLEOTIDE SEQUENCE [LARGE SCALE MRNA] (ISOFORMS 1 AND 2)</scope>
    <source>
        <strain>C57BL/6J</strain>
        <strain>NOD</strain>
        <tissue>Embryo</tissue>
        <tissue>Lung</tissue>
        <tissue>Spleen</tissue>
    </source>
</reference>
<reference key="3">
    <citation type="journal article" date="2003" name="DNA Res.">
        <title>Prediction of the coding sequences of mouse homologues of KIAA gene: III. The complete nucleotide sequences of 500 mouse KIAA-homologous cDNAs identified by screening of terminal sequences of cDNA clones randomly sampled from size-fractionated libraries.</title>
        <authorList>
            <person name="Okazaki N."/>
            <person name="Kikuno R."/>
            <person name="Ohara R."/>
            <person name="Inamoto S."/>
            <person name="Koseki H."/>
            <person name="Hiraoka S."/>
            <person name="Saga Y."/>
            <person name="Nagase T."/>
            <person name="Ohara O."/>
            <person name="Koga H."/>
        </authorList>
    </citation>
    <scope>NUCLEOTIDE SEQUENCE [LARGE SCALE MRNA] (ISOFORM 1)</scope>
    <source>
        <tissue>Embryonic tail</tissue>
    </source>
</reference>
<reference key="4">
    <citation type="journal article" date="2004" name="Genome Res.">
        <title>The status, quality, and expansion of the NIH full-length cDNA project: the Mammalian Gene Collection (MGC).</title>
        <authorList>
            <consortium name="The MGC Project Team"/>
        </authorList>
    </citation>
    <scope>NUCLEOTIDE SEQUENCE [LARGE SCALE MRNA] (ISOFORM 1)</scope>
    <source>
        <strain>C57BL/6J</strain>
        <tissue>Brain</tissue>
    </source>
</reference>
<reference key="5">
    <citation type="submission" date="1999-01" db="EMBL/GenBank/DDBJ databases">
        <title>Hic2, a novel homolog of Hic1 and gammaFBP.</title>
        <authorList>
            <person name="Grimm C."/>
            <person name="Graw J."/>
        </authorList>
    </citation>
    <scope>NUCLEOTIDE SEQUENCE [MRNA] OF 354-619 (ISOFORM 1)</scope>
    <source>
        <strain>Swiss Webster</strain>
        <tissue>Embryo</tissue>
    </source>
</reference>
<gene>
    <name type="primary">Hic2</name>
    <name type="synonym">Kiaa1020</name>
</gene>
<organism>
    <name type="scientific">Mus musculus</name>
    <name type="common">Mouse</name>
    <dbReference type="NCBI Taxonomy" id="10090"/>
    <lineage>
        <taxon>Eukaryota</taxon>
        <taxon>Metazoa</taxon>
        <taxon>Chordata</taxon>
        <taxon>Craniata</taxon>
        <taxon>Vertebrata</taxon>
        <taxon>Euteleostomi</taxon>
        <taxon>Mammalia</taxon>
        <taxon>Eutheria</taxon>
        <taxon>Euarchontoglires</taxon>
        <taxon>Glires</taxon>
        <taxon>Rodentia</taxon>
        <taxon>Myomorpha</taxon>
        <taxon>Muroidea</taxon>
        <taxon>Muridae</taxon>
        <taxon>Murinae</taxon>
        <taxon>Mus</taxon>
        <taxon>Mus</taxon>
    </lineage>
</organism>
<accession>Q9JLZ6</accession>
<accession>Q3U030</accession>
<accession>Q3ULP4</accession>
<accession>Q5K036</accession>
<accession>Q8BSZ9</accession>
<accession>Q8C3T5</accession>
<proteinExistence type="evidence at transcript level"/>
<sequence length="619" mass="66766">MVSGPLALRWCPWAGHRDMGPDMELPSHSKQLLLQLNQQRAKGFLCDVIIMVENSIFRAHKNVLAASSIYFKSLVLHDNLINLDTDMVSSTVFQQILDFIYTGKLLPSDQPSEPNFSTLLTAASYLQLPELAALCRRKLKRAGKPFGPGRVGTAGIGRPTRSQRLSTASVIQARFPGLVDVRKGHPAPQELPQAKGSDDELFLGTSTQESTHGLGLGGPAGGEMGLGGCSTSTNGSSGGCEQELGLDLSKKSPPLPPTTPGPHLTPEDPAQLSDSQRESPAPTSTSALPVGNSASFVELGATPEEPMDVEGAEENHLSLLEGQGGQPRKSLRHSARKKDWNKKEPVAGSPFDRRETGSKGSCPGEEGEGTGDRVPNGVLASSAGGGGPSASYGEQSFPCKEEEENGKDGSEDSGQSGSEGGSGHTGAHYVYRQEGYETVSYGDNVYVCIPCAKGFPSSEQLNAHVETHTEEELFIKEEGAYETGSGGAEEEAEDLSTPSAAYTADSRPFKCSVCEKTYKDPATLRQHEKTHWLTRPFPCNICGKMFTQRGTMTRHMRSHLGLKPFACDECGMRFTRQYRLTEHMRVHSGEKPYECQLCGGKFTQQRNLISHLRMHTSPS</sequence>
<name>HIC2_MOUSE</name>